<dbReference type="EC" id="2.7.7.1"/>
<dbReference type="EMBL" id="BA000002">
    <property type="protein sequence ID" value="BAA79478.2"/>
    <property type="molecule type" value="Genomic_DNA"/>
</dbReference>
<dbReference type="PIR" id="B72748">
    <property type="entry name" value="B72748"/>
</dbReference>
<dbReference type="RefSeq" id="WP_010865803.1">
    <property type="nucleotide sequence ID" value="NC_000854.2"/>
</dbReference>
<dbReference type="SMR" id="Q9YER8"/>
<dbReference type="STRING" id="272557.APE_0513.1"/>
<dbReference type="EnsemblBacteria" id="BAA79478">
    <property type="protein sequence ID" value="BAA79478"/>
    <property type="gene ID" value="APE_0513.1"/>
</dbReference>
<dbReference type="GeneID" id="1444691"/>
<dbReference type="KEGG" id="ape:APE_0513.1"/>
<dbReference type="eggNOG" id="arCOG00972">
    <property type="taxonomic scope" value="Archaea"/>
</dbReference>
<dbReference type="UniPathway" id="UPA00253">
    <property type="reaction ID" value="UER00600"/>
</dbReference>
<dbReference type="Proteomes" id="UP000002518">
    <property type="component" value="Chromosome"/>
</dbReference>
<dbReference type="GO" id="GO:0005737">
    <property type="term" value="C:cytoplasm"/>
    <property type="evidence" value="ECO:0007669"/>
    <property type="project" value="UniProtKB-SubCell"/>
</dbReference>
<dbReference type="GO" id="GO:0005524">
    <property type="term" value="F:ATP binding"/>
    <property type="evidence" value="ECO:0007669"/>
    <property type="project" value="UniProtKB-KW"/>
</dbReference>
<dbReference type="GO" id="GO:0000309">
    <property type="term" value="F:nicotinamide-nucleotide adenylyltransferase activity"/>
    <property type="evidence" value="ECO:0007669"/>
    <property type="project" value="UniProtKB-UniRule"/>
</dbReference>
<dbReference type="GO" id="GO:0009435">
    <property type="term" value="P:NAD biosynthetic process"/>
    <property type="evidence" value="ECO:0007669"/>
    <property type="project" value="UniProtKB-UniRule"/>
</dbReference>
<dbReference type="CDD" id="cd02166">
    <property type="entry name" value="NMNAT_Archaea"/>
    <property type="match status" value="1"/>
</dbReference>
<dbReference type="Gene3D" id="3.40.50.620">
    <property type="entry name" value="HUPs"/>
    <property type="match status" value="1"/>
</dbReference>
<dbReference type="HAMAP" id="MF_00243">
    <property type="entry name" value="NMN_adenylyltr"/>
    <property type="match status" value="1"/>
</dbReference>
<dbReference type="InterPro" id="IPR004821">
    <property type="entry name" value="Cyt_trans-like"/>
</dbReference>
<dbReference type="InterPro" id="IPR006418">
    <property type="entry name" value="NMN_Atrans_arc"/>
</dbReference>
<dbReference type="InterPro" id="IPR014729">
    <property type="entry name" value="Rossmann-like_a/b/a_fold"/>
</dbReference>
<dbReference type="NCBIfam" id="TIGR00125">
    <property type="entry name" value="cyt_tran_rel"/>
    <property type="match status" value="1"/>
</dbReference>
<dbReference type="NCBIfam" id="NF002243">
    <property type="entry name" value="PRK01153.1"/>
    <property type="match status" value="1"/>
</dbReference>
<dbReference type="PANTHER" id="PTHR21342:SF0">
    <property type="entry name" value="BIFUNCTIONAL NMN ADENYLYLTRANSFERASE_NUDIX HYDROLASE"/>
    <property type="match status" value="1"/>
</dbReference>
<dbReference type="PANTHER" id="PTHR21342">
    <property type="entry name" value="PHOSPHOPANTETHEINE ADENYLYLTRANSFERASE"/>
    <property type="match status" value="1"/>
</dbReference>
<dbReference type="Pfam" id="PF01467">
    <property type="entry name" value="CTP_transf_like"/>
    <property type="match status" value="1"/>
</dbReference>
<dbReference type="SUPFAM" id="SSF52374">
    <property type="entry name" value="Nucleotidylyl transferase"/>
    <property type="match status" value="1"/>
</dbReference>
<protein>
    <recommendedName>
        <fullName>Nicotinamide-nucleotide adenylyltransferase</fullName>
        <ecNumber>2.7.7.1</ecNumber>
    </recommendedName>
    <alternativeName>
        <fullName>NAD(+) diphosphorylase</fullName>
    </alternativeName>
    <alternativeName>
        <fullName>NAD(+) pyrophosphorylase</fullName>
    </alternativeName>
    <alternativeName>
        <fullName>NMN adenylyltransferase</fullName>
    </alternativeName>
</protein>
<reference key="1">
    <citation type="journal article" date="1999" name="DNA Res.">
        <title>Complete genome sequence of an aerobic hyper-thermophilic crenarchaeon, Aeropyrum pernix K1.</title>
        <authorList>
            <person name="Kawarabayasi Y."/>
            <person name="Hino Y."/>
            <person name="Horikawa H."/>
            <person name="Yamazaki S."/>
            <person name="Haikawa Y."/>
            <person name="Jin-no K."/>
            <person name="Takahashi M."/>
            <person name="Sekine M."/>
            <person name="Baba S."/>
            <person name="Ankai A."/>
            <person name="Kosugi H."/>
            <person name="Hosoyama A."/>
            <person name="Fukui S."/>
            <person name="Nagai Y."/>
            <person name="Nishijima K."/>
            <person name="Nakazawa H."/>
            <person name="Takamiya M."/>
            <person name="Masuda S."/>
            <person name="Funahashi T."/>
            <person name="Tanaka T."/>
            <person name="Kudoh Y."/>
            <person name="Yamazaki J."/>
            <person name="Kushida N."/>
            <person name="Oguchi A."/>
            <person name="Aoki K."/>
            <person name="Kubota K."/>
            <person name="Nakamura Y."/>
            <person name="Nomura N."/>
            <person name="Sako Y."/>
            <person name="Kikuchi H."/>
        </authorList>
    </citation>
    <scope>NUCLEOTIDE SEQUENCE [LARGE SCALE GENOMIC DNA]</scope>
    <source>
        <strain>ATCC 700893 / DSM 11879 / JCM 9820 / NBRC 100138 / K1</strain>
    </source>
</reference>
<gene>
    <name type="ordered locus">APE_0513.1</name>
</gene>
<proteinExistence type="inferred from homology"/>
<comment type="catalytic activity">
    <reaction>
        <text>beta-nicotinamide D-ribonucleotide + ATP + H(+) = diphosphate + NAD(+)</text>
        <dbReference type="Rhea" id="RHEA:21360"/>
        <dbReference type="ChEBI" id="CHEBI:14649"/>
        <dbReference type="ChEBI" id="CHEBI:15378"/>
        <dbReference type="ChEBI" id="CHEBI:30616"/>
        <dbReference type="ChEBI" id="CHEBI:33019"/>
        <dbReference type="ChEBI" id="CHEBI:57540"/>
        <dbReference type="EC" id="2.7.7.1"/>
    </reaction>
</comment>
<comment type="pathway">
    <text>Cofactor biosynthesis; NAD(+) biosynthesis; NAD(+) from nicotinamide D-ribonucleotide: step 1/1.</text>
</comment>
<comment type="subcellular location">
    <subcellularLocation>
        <location evidence="1">Cytoplasm</location>
    </subcellularLocation>
</comment>
<comment type="similarity">
    <text evidence="2">Belongs to the archaeal NMN adenylyltransferase family.</text>
</comment>
<accession>Q9YER8</accession>
<keyword id="KW-0067">ATP-binding</keyword>
<keyword id="KW-0963">Cytoplasm</keyword>
<keyword id="KW-0520">NAD</keyword>
<keyword id="KW-0547">Nucleotide-binding</keyword>
<keyword id="KW-0548">Nucleotidyltransferase</keyword>
<keyword id="KW-0662">Pyridine nucleotide biosynthesis</keyword>
<keyword id="KW-1185">Reference proteome</keyword>
<keyword id="KW-0808">Transferase</keyword>
<feature type="chain" id="PRO_0000134987" description="Nicotinamide-nucleotide adenylyltransferase">
    <location>
        <begin position="1"/>
        <end position="172"/>
    </location>
</feature>
<sequence length="172" mass="19828">MKRLLVVGRFQPPHLGHLHTIKWALGRAEEVIVVVGSAQESYTLENPMTAGERVHALRLMLEELDDWCRRLMIAPVPDIAMNKVWVQYLKMLLPPFDGVVSGNELVLMLFEDMGLAALRPPMFRRGECSGTRIRRLMASGESGWEDCLHPQVRRYVEEIGLPERLRRLQEMR</sequence>
<organism>
    <name type="scientific">Aeropyrum pernix (strain ATCC 700893 / DSM 11879 / JCM 9820 / NBRC 100138 / K1)</name>
    <dbReference type="NCBI Taxonomy" id="272557"/>
    <lineage>
        <taxon>Archaea</taxon>
        <taxon>Thermoproteota</taxon>
        <taxon>Thermoprotei</taxon>
        <taxon>Desulfurococcales</taxon>
        <taxon>Desulfurococcaceae</taxon>
        <taxon>Aeropyrum</taxon>
    </lineage>
</organism>
<name>NADM_AERPE</name>
<evidence type="ECO:0000250" key="1"/>
<evidence type="ECO:0000305" key="2"/>